<evidence type="ECO:0000255" key="1">
    <source>
        <dbReference type="HAMAP-Rule" id="MF_01663"/>
    </source>
</evidence>
<gene>
    <name evidence="1" type="primary">rhaM</name>
    <name type="ordered locus">ECIAI1_4106</name>
</gene>
<dbReference type="EC" id="5.1.3.32" evidence="1"/>
<dbReference type="EMBL" id="CU928160">
    <property type="protein sequence ID" value="CAR00877.1"/>
    <property type="molecule type" value="Genomic_DNA"/>
</dbReference>
<dbReference type="RefSeq" id="WP_000619487.1">
    <property type="nucleotide sequence ID" value="NC_011741.1"/>
</dbReference>
<dbReference type="SMR" id="B7M6V3"/>
<dbReference type="KEGG" id="ecr:ECIAI1_4106"/>
<dbReference type="HOGENOM" id="CLU_100689_2_0_6"/>
<dbReference type="UniPathway" id="UPA00125"/>
<dbReference type="GO" id="GO:0005737">
    <property type="term" value="C:cytoplasm"/>
    <property type="evidence" value="ECO:0007669"/>
    <property type="project" value="UniProtKB-SubCell"/>
</dbReference>
<dbReference type="GO" id="GO:0062192">
    <property type="term" value="F:L-rhamnose mutarotase activity"/>
    <property type="evidence" value="ECO:0007669"/>
    <property type="project" value="UniProtKB-EC"/>
</dbReference>
<dbReference type="GO" id="GO:0019301">
    <property type="term" value="P:rhamnose catabolic process"/>
    <property type="evidence" value="ECO:0007669"/>
    <property type="project" value="TreeGrafter"/>
</dbReference>
<dbReference type="FunFam" id="3.30.70.100:FF:000013">
    <property type="entry name" value="L-rhamnose mutarotase"/>
    <property type="match status" value="1"/>
</dbReference>
<dbReference type="Gene3D" id="3.30.70.100">
    <property type="match status" value="1"/>
</dbReference>
<dbReference type="HAMAP" id="MF_01663">
    <property type="entry name" value="L_rham_rotase"/>
    <property type="match status" value="1"/>
</dbReference>
<dbReference type="InterPro" id="IPR011008">
    <property type="entry name" value="Dimeric_a/b-barrel"/>
</dbReference>
<dbReference type="InterPro" id="IPR013448">
    <property type="entry name" value="L-rhamnose_mutarotase"/>
</dbReference>
<dbReference type="InterPro" id="IPR008000">
    <property type="entry name" value="Rham/fucose_mutarotase"/>
</dbReference>
<dbReference type="NCBIfam" id="TIGR02625">
    <property type="entry name" value="YiiL_rotase"/>
    <property type="match status" value="1"/>
</dbReference>
<dbReference type="PANTHER" id="PTHR34389">
    <property type="entry name" value="L-RHAMNOSE MUTAROTASE"/>
    <property type="match status" value="1"/>
</dbReference>
<dbReference type="PANTHER" id="PTHR34389:SF2">
    <property type="entry name" value="L-RHAMNOSE MUTAROTASE"/>
    <property type="match status" value="1"/>
</dbReference>
<dbReference type="Pfam" id="PF05336">
    <property type="entry name" value="rhaM"/>
    <property type="match status" value="1"/>
</dbReference>
<dbReference type="SUPFAM" id="SSF54909">
    <property type="entry name" value="Dimeric alpha+beta barrel"/>
    <property type="match status" value="1"/>
</dbReference>
<name>RHAM_ECO8A</name>
<feature type="chain" id="PRO_1000187219" description="L-rhamnose mutarotase">
    <location>
        <begin position="1"/>
        <end position="104"/>
    </location>
</feature>
<feature type="active site" description="Proton donor" evidence="1">
    <location>
        <position position="22"/>
    </location>
</feature>
<feature type="binding site" evidence="1">
    <location>
        <position position="18"/>
    </location>
    <ligand>
        <name>substrate</name>
    </ligand>
</feature>
<feature type="binding site" evidence="1">
    <location>
        <position position="41"/>
    </location>
    <ligand>
        <name>substrate</name>
    </ligand>
</feature>
<feature type="binding site" evidence="1">
    <location>
        <begin position="76"/>
        <end position="77"/>
    </location>
    <ligand>
        <name>substrate</name>
    </ligand>
</feature>
<sequence length="104" mass="12177">MIRKAFVMQVNPDAHEEYQRRHNPIWPELAAVLKSHGAHNYAIYLDKARNLLFATVEIESEERWNAVASTDVCQRWWKYMTDVMPANPDNSPVSSELQEVFYLP</sequence>
<organism>
    <name type="scientific">Escherichia coli O8 (strain IAI1)</name>
    <dbReference type="NCBI Taxonomy" id="585034"/>
    <lineage>
        <taxon>Bacteria</taxon>
        <taxon>Pseudomonadati</taxon>
        <taxon>Pseudomonadota</taxon>
        <taxon>Gammaproteobacteria</taxon>
        <taxon>Enterobacterales</taxon>
        <taxon>Enterobacteriaceae</taxon>
        <taxon>Escherichia</taxon>
    </lineage>
</organism>
<keyword id="KW-0119">Carbohydrate metabolism</keyword>
<keyword id="KW-0963">Cytoplasm</keyword>
<keyword id="KW-0413">Isomerase</keyword>
<keyword id="KW-0684">Rhamnose metabolism</keyword>
<comment type="function">
    <text evidence="1">Involved in the anomeric conversion of L-rhamnose.</text>
</comment>
<comment type="catalytic activity">
    <reaction evidence="1">
        <text>alpha-L-rhamnose = beta-L-rhamnose</text>
        <dbReference type="Rhea" id="RHEA:25584"/>
        <dbReference type="ChEBI" id="CHEBI:27586"/>
        <dbReference type="ChEBI" id="CHEBI:27907"/>
        <dbReference type="EC" id="5.1.3.32"/>
    </reaction>
</comment>
<comment type="pathway">
    <text evidence="1">Carbohydrate metabolism; L-rhamnose metabolism.</text>
</comment>
<comment type="subunit">
    <text evidence="1">Homodimer.</text>
</comment>
<comment type="subcellular location">
    <subcellularLocation>
        <location evidence="1">Cytoplasm</location>
    </subcellularLocation>
</comment>
<comment type="similarity">
    <text evidence="1">Belongs to the rhamnose mutarotase family.</text>
</comment>
<reference key="1">
    <citation type="journal article" date="2009" name="PLoS Genet.">
        <title>Organised genome dynamics in the Escherichia coli species results in highly diverse adaptive paths.</title>
        <authorList>
            <person name="Touchon M."/>
            <person name="Hoede C."/>
            <person name="Tenaillon O."/>
            <person name="Barbe V."/>
            <person name="Baeriswyl S."/>
            <person name="Bidet P."/>
            <person name="Bingen E."/>
            <person name="Bonacorsi S."/>
            <person name="Bouchier C."/>
            <person name="Bouvet O."/>
            <person name="Calteau A."/>
            <person name="Chiapello H."/>
            <person name="Clermont O."/>
            <person name="Cruveiller S."/>
            <person name="Danchin A."/>
            <person name="Diard M."/>
            <person name="Dossat C."/>
            <person name="Karoui M.E."/>
            <person name="Frapy E."/>
            <person name="Garry L."/>
            <person name="Ghigo J.M."/>
            <person name="Gilles A.M."/>
            <person name="Johnson J."/>
            <person name="Le Bouguenec C."/>
            <person name="Lescat M."/>
            <person name="Mangenot S."/>
            <person name="Martinez-Jehanne V."/>
            <person name="Matic I."/>
            <person name="Nassif X."/>
            <person name="Oztas S."/>
            <person name="Petit M.A."/>
            <person name="Pichon C."/>
            <person name="Rouy Z."/>
            <person name="Ruf C.S."/>
            <person name="Schneider D."/>
            <person name="Tourret J."/>
            <person name="Vacherie B."/>
            <person name="Vallenet D."/>
            <person name="Medigue C."/>
            <person name="Rocha E.P.C."/>
            <person name="Denamur E."/>
        </authorList>
    </citation>
    <scope>NUCLEOTIDE SEQUENCE [LARGE SCALE GENOMIC DNA]</scope>
    <source>
        <strain>IAI1</strain>
    </source>
</reference>
<accession>B7M6V3</accession>
<proteinExistence type="inferred from homology"/>
<protein>
    <recommendedName>
        <fullName evidence="1">L-rhamnose mutarotase</fullName>
        <ecNumber evidence="1">5.1.3.32</ecNumber>
    </recommendedName>
    <alternativeName>
        <fullName evidence="1">Rhamnose 1-epimerase</fullName>
    </alternativeName>
    <alternativeName>
        <fullName evidence="1">Type-3 mutarotase</fullName>
    </alternativeName>
</protein>